<sequence length="803" mass="90106">MWIQVRTIDGSQTRTIEDVSRKATIEELRERVWALFDVRPECQRLFYRGKQLENGYTLFDYDVGLNDIIQLLVRPDSSLPSTSKQNDAQVKPSSHNPPKVKKTARGGSSSQPSTSARTCLIDPGFGLYKVNELVDARDVGLGAWFEAHIHSVTRASDGHSRGKTPLKNGSSYKRTNGNVNHNSKENTNKLDNVPSTSNSDSVAADEDVIYHIEYDEYPESGILEMNVKDLRPRARTILKWNELNVGDVVMVNYNVENPGKRGFWYDAEITTLKTISRTKKEVRVKVFLGGSEGTLNDCRVMSVDEIFKIEKPGAHPISFADGKFLRKNDPECDLCGGDPDKTCHMCSCHKCGEKRDPNMQLLCDECNMAYHIYCLSPPLDKVPEEEYWYCPSCKTDSSEVVKAGERLKLSKKKAKMPSASTESRRDWGRGMACVGRTKECTIVPSNHYGPIPGIPVGSTWRFRVQVSEAGVHRPHVGGIHGRSNDGAYSLVLAGGFEDEVDRGDEFTYTGSGGKNLAGNKRIGAPSADQTLTNMNRALALNCDAPLDDKIGAESRNWRAGKPVRVIRSFKGRKISKYAPEEGNRYDGIYKVVKYWPEISSSHGFLVWRYLLRRDDVEPAPWTSEGIERSRRLCLRLQYPAGYPSEKEGKKTKGQSKKQGSEATKRPASDDECPGDSKVLKASDSTDAVEAFQLTPQQQRLIREDCQNQKLWDEVLASLVEGPNFLKKLEQSFMCVCCQELVYQPVTTECFHNVCKDCLQRSFKAQVFSCPACRHDLGQNYVMVLNETLQTLLDLFFPGYSKGR</sequence>
<dbReference type="EC" id="2.3.2.27"/>
<dbReference type="EMBL" id="AB116653">
    <property type="protein sequence ID" value="BAC81739.1"/>
    <property type="molecule type" value="mRNA"/>
</dbReference>
<dbReference type="EMBL" id="AF274047">
    <property type="protein sequence ID" value="AAM33798.1"/>
    <property type="molecule type" value="mRNA"/>
</dbReference>
<dbReference type="EMBL" id="AK031036">
    <property type="protein sequence ID" value="BAC27224.1"/>
    <property type="molecule type" value="mRNA"/>
</dbReference>
<dbReference type="EMBL" id="AK041564">
    <property type="protein sequence ID" value="BAC30987.1"/>
    <property type="molecule type" value="mRNA"/>
</dbReference>
<dbReference type="EMBL" id="AK042321">
    <property type="protein sequence ID" value="BAC31223.1"/>
    <property type="molecule type" value="mRNA"/>
</dbReference>
<dbReference type="EMBL" id="AK051743">
    <property type="protein sequence ID" value="BAC34750.1"/>
    <property type="molecule type" value="mRNA"/>
</dbReference>
<dbReference type="EMBL" id="AK080925">
    <property type="protein sequence ID" value="BAC38081.1"/>
    <property type="molecule type" value="mRNA"/>
</dbReference>
<dbReference type="EMBL" id="BC060241">
    <property type="protein sequence ID" value="AAH60241.1"/>
    <property type="molecule type" value="mRNA"/>
</dbReference>
<dbReference type="CCDS" id="CCDS37955.1">
    <molecule id="Q7TMI3-1"/>
</dbReference>
<dbReference type="RefSeq" id="NP_659122.2">
    <molecule id="Q7TMI3-1"/>
    <property type="nucleotide sequence ID" value="NM_144873.3"/>
</dbReference>
<dbReference type="BMRB" id="Q7TMI3"/>
<dbReference type="SMR" id="Q7TMI3"/>
<dbReference type="BioGRID" id="224558">
    <property type="interactions" value="78"/>
</dbReference>
<dbReference type="FunCoup" id="Q7TMI3">
    <property type="interactions" value="3934"/>
</dbReference>
<dbReference type="STRING" id="10090.ENSMUSP00000025739"/>
<dbReference type="GlyGen" id="Q7TMI3">
    <property type="glycosylation" value="1 site, 1 O-linked glycan (1 site)"/>
</dbReference>
<dbReference type="iPTMnet" id="Q7TMI3"/>
<dbReference type="PhosphoSitePlus" id="Q7TMI3"/>
<dbReference type="PaxDb" id="10090-ENSMUSP00000025739"/>
<dbReference type="PeptideAtlas" id="Q7TMI3"/>
<dbReference type="ProteomicsDB" id="298475">
    <molecule id="Q7TMI3-1"/>
</dbReference>
<dbReference type="ProteomicsDB" id="298476">
    <molecule id="Q7TMI3-2"/>
</dbReference>
<dbReference type="ProteomicsDB" id="298477">
    <molecule id="Q7TMI3-3"/>
</dbReference>
<dbReference type="Pumba" id="Q7TMI3"/>
<dbReference type="Antibodypedia" id="9697">
    <property type="antibodies" value="313 antibodies from 30 providers"/>
</dbReference>
<dbReference type="DNASU" id="109113"/>
<dbReference type="Ensembl" id="ENSMUST00000025739.14">
    <molecule id="Q7TMI3-1"/>
    <property type="protein sequence ID" value="ENSMUSP00000025739.8"/>
    <property type="gene ID" value="ENSMUSG00000024817.14"/>
</dbReference>
<dbReference type="GeneID" id="109113"/>
<dbReference type="KEGG" id="mmu:109113"/>
<dbReference type="UCSC" id="uc008hef.1">
    <molecule id="Q7TMI3-3"/>
    <property type="organism name" value="mouse"/>
</dbReference>
<dbReference type="UCSC" id="uc008heh.1">
    <molecule id="Q7TMI3-2"/>
    <property type="organism name" value="mouse"/>
</dbReference>
<dbReference type="UCSC" id="uc008hei.1">
    <molecule id="Q7TMI3-1"/>
    <property type="organism name" value="mouse"/>
</dbReference>
<dbReference type="AGR" id="MGI:1923718"/>
<dbReference type="CTD" id="115426"/>
<dbReference type="MGI" id="MGI:1923718">
    <property type="gene designation" value="Uhrf2"/>
</dbReference>
<dbReference type="VEuPathDB" id="HostDB:ENSMUSG00000024817"/>
<dbReference type="eggNOG" id="ENOG502QRDQ">
    <property type="taxonomic scope" value="Eukaryota"/>
</dbReference>
<dbReference type="GeneTree" id="ENSGT00390000008296"/>
<dbReference type="HOGENOM" id="CLU_022357_0_0_1"/>
<dbReference type="InParanoid" id="Q7TMI3"/>
<dbReference type="OMA" id="CHMCSCH"/>
<dbReference type="OrthoDB" id="2270193at2759"/>
<dbReference type="PhylomeDB" id="Q7TMI3"/>
<dbReference type="TreeFam" id="TF106434"/>
<dbReference type="Reactome" id="R-MMU-3899300">
    <property type="pathway name" value="SUMOylation of transcription cofactors"/>
</dbReference>
<dbReference type="UniPathway" id="UPA00143"/>
<dbReference type="BioGRID-ORCS" id="109113">
    <property type="hits" value="4 hits in 82 CRISPR screens"/>
</dbReference>
<dbReference type="ChiTaRS" id="Uhrf2">
    <property type="organism name" value="mouse"/>
</dbReference>
<dbReference type="PRO" id="PR:Q7TMI3"/>
<dbReference type="Proteomes" id="UP000000589">
    <property type="component" value="Chromosome 19"/>
</dbReference>
<dbReference type="RNAct" id="Q7TMI3">
    <property type="molecule type" value="protein"/>
</dbReference>
<dbReference type="Bgee" id="ENSMUSG00000024817">
    <property type="expression patterns" value="Expressed in superior cervical ganglion and 247 other cell types or tissues"/>
</dbReference>
<dbReference type="GO" id="GO:0000792">
    <property type="term" value="C:heterochromatin"/>
    <property type="evidence" value="ECO:0000314"/>
    <property type="project" value="UniProtKB"/>
</dbReference>
<dbReference type="GO" id="GO:0005654">
    <property type="term" value="C:nucleoplasm"/>
    <property type="evidence" value="ECO:0007669"/>
    <property type="project" value="Ensembl"/>
</dbReference>
<dbReference type="GO" id="GO:0005634">
    <property type="term" value="C:nucleus"/>
    <property type="evidence" value="ECO:0000314"/>
    <property type="project" value="UniProtKB"/>
</dbReference>
<dbReference type="GO" id="GO:0005721">
    <property type="term" value="C:pericentric heterochromatin"/>
    <property type="evidence" value="ECO:0007669"/>
    <property type="project" value="Ensembl"/>
</dbReference>
<dbReference type="GO" id="GO:0003677">
    <property type="term" value="F:DNA binding"/>
    <property type="evidence" value="ECO:0007669"/>
    <property type="project" value="UniProtKB-KW"/>
</dbReference>
<dbReference type="GO" id="GO:0042393">
    <property type="term" value="F:histone binding"/>
    <property type="evidence" value="ECO:0000314"/>
    <property type="project" value="UniProtKB"/>
</dbReference>
<dbReference type="GO" id="GO:0061629">
    <property type="term" value="F:RNA polymerase II-specific DNA-binding transcription factor binding"/>
    <property type="evidence" value="ECO:0007669"/>
    <property type="project" value="Ensembl"/>
</dbReference>
<dbReference type="GO" id="GO:0061630">
    <property type="term" value="F:ubiquitin protein ligase activity"/>
    <property type="evidence" value="ECO:0000266"/>
    <property type="project" value="MGI"/>
</dbReference>
<dbReference type="GO" id="GO:0004842">
    <property type="term" value="F:ubiquitin-protein transferase activity"/>
    <property type="evidence" value="ECO:0000250"/>
    <property type="project" value="HGNC-UCL"/>
</dbReference>
<dbReference type="GO" id="GO:0008270">
    <property type="term" value="F:zinc ion binding"/>
    <property type="evidence" value="ECO:0007669"/>
    <property type="project" value="UniProtKB-KW"/>
</dbReference>
<dbReference type="GO" id="GO:0030154">
    <property type="term" value="P:cell differentiation"/>
    <property type="evidence" value="ECO:0000250"/>
    <property type="project" value="HGNC-UCL"/>
</dbReference>
<dbReference type="GO" id="GO:0051865">
    <property type="term" value="P:protein autoubiquitination"/>
    <property type="evidence" value="ECO:0000250"/>
    <property type="project" value="HGNC-UCL"/>
</dbReference>
<dbReference type="GO" id="GO:0016567">
    <property type="term" value="P:protein ubiquitination"/>
    <property type="evidence" value="ECO:0000250"/>
    <property type="project" value="HGNC-UCL"/>
</dbReference>
<dbReference type="GO" id="GO:0051726">
    <property type="term" value="P:regulation of cell cycle"/>
    <property type="evidence" value="ECO:0000250"/>
    <property type="project" value="UniProtKB"/>
</dbReference>
<dbReference type="CDD" id="cd15617">
    <property type="entry name" value="PHD_UHRF2"/>
    <property type="match status" value="1"/>
</dbReference>
<dbReference type="CDD" id="cd16770">
    <property type="entry name" value="RING-HC_UHRF2"/>
    <property type="match status" value="1"/>
</dbReference>
<dbReference type="CDD" id="cd20456">
    <property type="entry name" value="Tudor_UHRF2_rpt1"/>
    <property type="match status" value="1"/>
</dbReference>
<dbReference type="CDD" id="cd17123">
    <property type="entry name" value="Ubl_UHRF2"/>
    <property type="match status" value="1"/>
</dbReference>
<dbReference type="FunFam" id="2.30.280.10:FF:000001">
    <property type="entry name" value="E3 ubiquitin-protein ligase UHRF1 isoform 1"/>
    <property type="match status" value="1"/>
</dbReference>
<dbReference type="FunFam" id="2.30.30.30:FF:000142">
    <property type="entry name" value="E3 ubiquitin-protein ligase UHRF2"/>
    <property type="match status" value="1"/>
</dbReference>
<dbReference type="FunFam" id="2.30.30.1150:FF:000001">
    <property type="entry name" value="E3 ubiquitin-protein ligase UHRF2 isoform X1"/>
    <property type="match status" value="1"/>
</dbReference>
<dbReference type="FunFam" id="3.10.20.90:FF:000165">
    <property type="entry name" value="E3 ubiquitin-protein ligase UHRF2 isoform X1"/>
    <property type="match status" value="1"/>
</dbReference>
<dbReference type="FunFam" id="3.30.40.10:FF:000066">
    <property type="entry name" value="E3 ubiquitin-protein ligase UHRF2 isoform X1"/>
    <property type="match status" value="1"/>
</dbReference>
<dbReference type="Gene3D" id="2.30.30.1150">
    <property type="match status" value="1"/>
</dbReference>
<dbReference type="Gene3D" id="2.30.30.140">
    <property type="match status" value="1"/>
</dbReference>
<dbReference type="Gene3D" id="3.10.20.90">
    <property type="entry name" value="Phosphatidylinositol 3-kinase Catalytic Subunit, Chain A, domain 1"/>
    <property type="match status" value="1"/>
</dbReference>
<dbReference type="Gene3D" id="2.30.280.10">
    <property type="entry name" value="SRA-YDG"/>
    <property type="match status" value="1"/>
</dbReference>
<dbReference type="Gene3D" id="3.30.40.10">
    <property type="entry name" value="Zinc/RING finger domain, C3HC4 (zinc finger)"/>
    <property type="match status" value="1"/>
</dbReference>
<dbReference type="InterPro" id="IPR047467">
    <property type="entry name" value="PHD_UHRF2"/>
</dbReference>
<dbReference type="InterPro" id="IPR015947">
    <property type="entry name" value="PUA-like_sf"/>
</dbReference>
<dbReference type="InterPro" id="IPR047466">
    <property type="entry name" value="RING-HC_UHRF2"/>
</dbReference>
<dbReference type="InterPro" id="IPR036987">
    <property type="entry name" value="SRA-YDG_sf"/>
</dbReference>
<dbReference type="InterPro" id="IPR003105">
    <property type="entry name" value="SRA_YDG"/>
</dbReference>
<dbReference type="InterPro" id="IPR021991">
    <property type="entry name" value="TTD_dom"/>
</dbReference>
<dbReference type="InterPro" id="IPR047407">
    <property type="entry name" value="Tudor_UHRF2_rpt1"/>
</dbReference>
<dbReference type="InterPro" id="IPR000626">
    <property type="entry name" value="Ubiquitin-like_dom"/>
</dbReference>
<dbReference type="InterPro" id="IPR029071">
    <property type="entry name" value="Ubiquitin-like_domsf"/>
</dbReference>
<dbReference type="InterPro" id="IPR047468">
    <property type="entry name" value="Ubl_UHRF2"/>
</dbReference>
<dbReference type="InterPro" id="IPR045134">
    <property type="entry name" value="UHRF1/2-like"/>
</dbReference>
<dbReference type="InterPro" id="IPR011011">
    <property type="entry name" value="Znf_FYVE_PHD"/>
</dbReference>
<dbReference type="InterPro" id="IPR001965">
    <property type="entry name" value="Znf_PHD"/>
</dbReference>
<dbReference type="InterPro" id="IPR019787">
    <property type="entry name" value="Znf_PHD-finger"/>
</dbReference>
<dbReference type="InterPro" id="IPR001841">
    <property type="entry name" value="Znf_RING"/>
</dbReference>
<dbReference type="InterPro" id="IPR013083">
    <property type="entry name" value="Znf_RING/FYVE/PHD"/>
</dbReference>
<dbReference type="InterPro" id="IPR017907">
    <property type="entry name" value="Znf_RING_CS"/>
</dbReference>
<dbReference type="PANTHER" id="PTHR14140">
    <property type="entry name" value="E3 UBIQUITIN-PROTEIN LIGASE UHRF-RELATED"/>
    <property type="match status" value="1"/>
</dbReference>
<dbReference type="PANTHER" id="PTHR14140:SF3">
    <property type="entry name" value="E3 UBIQUITIN-PROTEIN LIGASE UHRF2"/>
    <property type="match status" value="1"/>
</dbReference>
<dbReference type="Pfam" id="PF00628">
    <property type="entry name" value="PHD"/>
    <property type="match status" value="1"/>
</dbReference>
<dbReference type="Pfam" id="PF02182">
    <property type="entry name" value="SAD_SRA"/>
    <property type="match status" value="1"/>
</dbReference>
<dbReference type="Pfam" id="PF12148">
    <property type="entry name" value="TTD"/>
    <property type="match status" value="1"/>
</dbReference>
<dbReference type="Pfam" id="PF00240">
    <property type="entry name" value="ubiquitin"/>
    <property type="match status" value="1"/>
</dbReference>
<dbReference type="SMART" id="SM00249">
    <property type="entry name" value="PHD"/>
    <property type="match status" value="1"/>
</dbReference>
<dbReference type="SMART" id="SM00184">
    <property type="entry name" value="RING"/>
    <property type="match status" value="2"/>
</dbReference>
<dbReference type="SMART" id="SM00466">
    <property type="entry name" value="SRA"/>
    <property type="match status" value="1"/>
</dbReference>
<dbReference type="SMART" id="SM00213">
    <property type="entry name" value="UBQ"/>
    <property type="match status" value="1"/>
</dbReference>
<dbReference type="SUPFAM" id="SSF57903">
    <property type="entry name" value="FYVE/PHD zinc finger"/>
    <property type="match status" value="1"/>
</dbReference>
<dbReference type="SUPFAM" id="SSF88697">
    <property type="entry name" value="PUA domain-like"/>
    <property type="match status" value="1"/>
</dbReference>
<dbReference type="SUPFAM" id="SSF57850">
    <property type="entry name" value="RING/U-box"/>
    <property type="match status" value="1"/>
</dbReference>
<dbReference type="SUPFAM" id="SSF54236">
    <property type="entry name" value="Ubiquitin-like"/>
    <property type="match status" value="1"/>
</dbReference>
<dbReference type="PROSITE" id="PS50053">
    <property type="entry name" value="UBIQUITIN_2"/>
    <property type="match status" value="1"/>
</dbReference>
<dbReference type="PROSITE" id="PS51015">
    <property type="entry name" value="YDG"/>
    <property type="match status" value="1"/>
</dbReference>
<dbReference type="PROSITE" id="PS01359">
    <property type="entry name" value="ZF_PHD_1"/>
    <property type="match status" value="1"/>
</dbReference>
<dbReference type="PROSITE" id="PS50016">
    <property type="entry name" value="ZF_PHD_2"/>
    <property type="match status" value="1"/>
</dbReference>
<dbReference type="PROSITE" id="PS00518">
    <property type="entry name" value="ZF_RING_1"/>
    <property type="match status" value="1"/>
</dbReference>
<dbReference type="PROSITE" id="PS50089">
    <property type="entry name" value="ZF_RING_2"/>
    <property type="match status" value="1"/>
</dbReference>
<proteinExistence type="evidence at protein level"/>
<reference key="1">
    <citation type="submission" date="2000-06" db="EMBL/GenBank/DDBJ databases">
        <title>LMO2-induced T cell leukemias overexpress a novel gene, Uhr1, containing RING and PHD zinc fingers and an ubiquitin-like domain.</title>
        <authorList>
            <person name="Davenport J.W."/>
            <person name="Fernandes E.R."/>
            <person name="Neale G.A.M."/>
            <person name="Goorha R.M."/>
        </authorList>
    </citation>
    <scope>NUCLEOTIDE SEQUENCE [MRNA] (ISOFORM 1)</scope>
    <source>
        <tissue>Leukemic T-cell</tissue>
    </source>
</reference>
<reference key="2">
    <citation type="submission" date="2003-08" db="EMBL/GenBank/DDBJ databases">
        <authorList>
            <person name="Mori T."/>
            <person name="Li Y."/>
            <person name="Kochi H."/>
        </authorList>
    </citation>
    <scope>NUCLEOTIDE SEQUENCE [MRNA] (ISOFORM 1)</scope>
    <source>
        <strain>Swiss Webster / NIH</strain>
        <tissue>Embryo</tissue>
    </source>
</reference>
<reference key="3">
    <citation type="journal article" date="2005" name="Science">
        <title>The transcriptional landscape of the mammalian genome.</title>
        <authorList>
            <person name="Carninci P."/>
            <person name="Kasukawa T."/>
            <person name="Katayama S."/>
            <person name="Gough J."/>
            <person name="Frith M.C."/>
            <person name="Maeda N."/>
            <person name="Oyama R."/>
            <person name="Ravasi T."/>
            <person name="Lenhard B."/>
            <person name="Wells C."/>
            <person name="Kodzius R."/>
            <person name="Shimokawa K."/>
            <person name="Bajic V.B."/>
            <person name="Brenner S.E."/>
            <person name="Batalov S."/>
            <person name="Forrest A.R."/>
            <person name="Zavolan M."/>
            <person name="Davis M.J."/>
            <person name="Wilming L.G."/>
            <person name="Aidinis V."/>
            <person name="Allen J.E."/>
            <person name="Ambesi-Impiombato A."/>
            <person name="Apweiler R."/>
            <person name="Aturaliya R.N."/>
            <person name="Bailey T.L."/>
            <person name="Bansal M."/>
            <person name="Baxter L."/>
            <person name="Beisel K.W."/>
            <person name="Bersano T."/>
            <person name="Bono H."/>
            <person name="Chalk A.M."/>
            <person name="Chiu K.P."/>
            <person name="Choudhary V."/>
            <person name="Christoffels A."/>
            <person name="Clutterbuck D.R."/>
            <person name="Crowe M.L."/>
            <person name="Dalla E."/>
            <person name="Dalrymple B.P."/>
            <person name="de Bono B."/>
            <person name="Della Gatta G."/>
            <person name="di Bernardo D."/>
            <person name="Down T."/>
            <person name="Engstrom P."/>
            <person name="Fagiolini M."/>
            <person name="Faulkner G."/>
            <person name="Fletcher C.F."/>
            <person name="Fukushima T."/>
            <person name="Furuno M."/>
            <person name="Futaki S."/>
            <person name="Gariboldi M."/>
            <person name="Georgii-Hemming P."/>
            <person name="Gingeras T.R."/>
            <person name="Gojobori T."/>
            <person name="Green R.E."/>
            <person name="Gustincich S."/>
            <person name="Harbers M."/>
            <person name="Hayashi Y."/>
            <person name="Hensch T.K."/>
            <person name="Hirokawa N."/>
            <person name="Hill D."/>
            <person name="Huminiecki L."/>
            <person name="Iacono M."/>
            <person name="Ikeo K."/>
            <person name="Iwama A."/>
            <person name="Ishikawa T."/>
            <person name="Jakt M."/>
            <person name="Kanapin A."/>
            <person name="Katoh M."/>
            <person name="Kawasawa Y."/>
            <person name="Kelso J."/>
            <person name="Kitamura H."/>
            <person name="Kitano H."/>
            <person name="Kollias G."/>
            <person name="Krishnan S.P."/>
            <person name="Kruger A."/>
            <person name="Kummerfeld S.K."/>
            <person name="Kurochkin I.V."/>
            <person name="Lareau L.F."/>
            <person name="Lazarevic D."/>
            <person name="Lipovich L."/>
            <person name="Liu J."/>
            <person name="Liuni S."/>
            <person name="McWilliam S."/>
            <person name="Madan Babu M."/>
            <person name="Madera M."/>
            <person name="Marchionni L."/>
            <person name="Matsuda H."/>
            <person name="Matsuzawa S."/>
            <person name="Miki H."/>
            <person name="Mignone F."/>
            <person name="Miyake S."/>
            <person name="Morris K."/>
            <person name="Mottagui-Tabar S."/>
            <person name="Mulder N."/>
            <person name="Nakano N."/>
            <person name="Nakauchi H."/>
            <person name="Ng P."/>
            <person name="Nilsson R."/>
            <person name="Nishiguchi S."/>
            <person name="Nishikawa S."/>
            <person name="Nori F."/>
            <person name="Ohara O."/>
            <person name="Okazaki Y."/>
            <person name="Orlando V."/>
            <person name="Pang K.C."/>
            <person name="Pavan W.J."/>
            <person name="Pavesi G."/>
            <person name="Pesole G."/>
            <person name="Petrovsky N."/>
            <person name="Piazza S."/>
            <person name="Reed J."/>
            <person name="Reid J.F."/>
            <person name="Ring B.Z."/>
            <person name="Ringwald M."/>
            <person name="Rost B."/>
            <person name="Ruan Y."/>
            <person name="Salzberg S.L."/>
            <person name="Sandelin A."/>
            <person name="Schneider C."/>
            <person name="Schoenbach C."/>
            <person name="Sekiguchi K."/>
            <person name="Semple C.A."/>
            <person name="Seno S."/>
            <person name="Sessa L."/>
            <person name="Sheng Y."/>
            <person name="Shibata Y."/>
            <person name="Shimada H."/>
            <person name="Shimada K."/>
            <person name="Silva D."/>
            <person name="Sinclair B."/>
            <person name="Sperling S."/>
            <person name="Stupka E."/>
            <person name="Sugiura K."/>
            <person name="Sultana R."/>
            <person name="Takenaka Y."/>
            <person name="Taki K."/>
            <person name="Tammoja K."/>
            <person name="Tan S.L."/>
            <person name="Tang S."/>
            <person name="Taylor M.S."/>
            <person name="Tegner J."/>
            <person name="Teichmann S.A."/>
            <person name="Ueda H.R."/>
            <person name="van Nimwegen E."/>
            <person name="Verardo R."/>
            <person name="Wei C.L."/>
            <person name="Yagi K."/>
            <person name="Yamanishi H."/>
            <person name="Zabarovsky E."/>
            <person name="Zhu S."/>
            <person name="Zimmer A."/>
            <person name="Hide W."/>
            <person name="Bult C."/>
            <person name="Grimmond S.M."/>
            <person name="Teasdale R.D."/>
            <person name="Liu E.T."/>
            <person name="Brusic V."/>
            <person name="Quackenbush J."/>
            <person name="Wahlestedt C."/>
            <person name="Mattick J.S."/>
            <person name="Hume D.A."/>
            <person name="Kai C."/>
            <person name="Sasaki D."/>
            <person name="Tomaru Y."/>
            <person name="Fukuda S."/>
            <person name="Kanamori-Katayama M."/>
            <person name="Suzuki M."/>
            <person name="Aoki J."/>
            <person name="Arakawa T."/>
            <person name="Iida J."/>
            <person name="Imamura K."/>
            <person name="Itoh M."/>
            <person name="Kato T."/>
            <person name="Kawaji H."/>
            <person name="Kawagashira N."/>
            <person name="Kawashima T."/>
            <person name="Kojima M."/>
            <person name="Kondo S."/>
            <person name="Konno H."/>
            <person name="Nakano K."/>
            <person name="Ninomiya N."/>
            <person name="Nishio T."/>
            <person name="Okada M."/>
            <person name="Plessy C."/>
            <person name="Shibata K."/>
            <person name="Shiraki T."/>
            <person name="Suzuki S."/>
            <person name="Tagami M."/>
            <person name="Waki K."/>
            <person name="Watahiki A."/>
            <person name="Okamura-Oho Y."/>
            <person name="Suzuki H."/>
            <person name="Kawai J."/>
            <person name="Hayashizaki Y."/>
        </authorList>
    </citation>
    <scope>NUCLEOTIDE SEQUENCE [LARGE SCALE MRNA] (ISOFORMS 2 AND 3)</scope>
    <scope>NUCLEOTIDE SEQUENCE [LARGE SCALE MRNA] OF 1-195</scope>
    <source>
        <strain>C57BL/6J</strain>
        <tissue>Adipose tissue</tissue>
        <tissue>Spinal ganglion</tissue>
        <tissue>Thymus</tissue>
    </source>
</reference>
<reference key="4">
    <citation type="journal article" date="2004" name="Genome Res.">
        <title>The status, quality, and expansion of the NIH full-length cDNA project: the Mammalian Gene Collection (MGC).</title>
        <authorList>
            <consortium name="The MGC Project Team"/>
        </authorList>
    </citation>
    <scope>NUCLEOTIDE SEQUENCE [LARGE SCALE MRNA] (ISOFORM 1)</scope>
    <source>
        <tissue>Embryo</tissue>
    </source>
</reference>
<reference key="5">
    <citation type="journal article" date="2010" name="Cell">
        <title>A tissue-specific atlas of mouse protein phosphorylation and expression.</title>
        <authorList>
            <person name="Huttlin E.L."/>
            <person name="Jedrychowski M.P."/>
            <person name="Elias J.E."/>
            <person name="Goswami T."/>
            <person name="Rad R."/>
            <person name="Beausoleil S.A."/>
            <person name="Villen J."/>
            <person name="Haas W."/>
            <person name="Sowa M.E."/>
            <person name="Gygi S.P."/>
        </authorList>
    </citation>
    <scope>PHOSPHORYLATION [LARGE SCALE ANALYSIS] AT SER-668</scope>
    <scope>IDENTIFICATION BY MASS SPECTROMETRY [LARGE SCALE ANALYSIS]</scope>
    <source>
        <tissue>Testis</tissue>
    </source>
</reference>
<reference key="6">
    <citation type="journal article" date="2011" name="J. Cell. Biochem.">
        <title>Cooperative DNA and histone binding by Uhrf2 links the two major repressive epigenetic pathways.</title>
        <authorList>
            <person name="Pichler G."/>
            <person name="Wolf P."/>
            <person name="Schmidt C.S."/>
            <person name="Meilinger D."/>
            <person name="Schneider K."/>
            <person name="Frauer C."/>
            <person name="Fellinger K."/>
            <person name="Rottach A."/>
            <person name="Leonhardt H."/>
        </authorList>
    </citation>
    <scope>FUNCTION</scope>
    <scope>DNA-BINDING</scope>
    <scope>INTERACTION WITH H3</scope>
    <scope>SUBCELLULAR LOCATION</scope>
    <scope>INDUCTION</scope>
    <scope>MUTAGENESIS OF TYR-214 AND TYR-217</scope>
</reference>
<reference key="7">
    <citation type="journal article" date="2013" name="Cell">
        <title>Dynamic readers for 5-(hydroxy)methylcytosine and its oxidized derivatives.</title>
        <authorList>
            <person name="Spruijt C.G."/>
            <person name="Gnerlich F."/>
            <person name="Smits A.H."/>
            <person name="Pfaffeneder T."/>
            <person name="Jansen P.W."/>
            <person name="Bauer C."/>
            <person name="Munzel M."/>
            <person name="Wagner M."/>
            <person name="Muller M."/>
            <person name="Khan F."/>
            <person name="Eberl H.C."/>
            <person name="Mensinga A."/>
            <person name="Brinkman A.B."/>
            <person name="Lephikov K."/>
            <person name="Muller U."/>
            <person name="Walter J."/>
            <person name="Boelens R."/>
            <person name="van Ingen H."/>
            <person name="Leonhardt H."/>
            <person name="Carell T."/>
            <person name="Vermeulen M."/>
        </authorList>
    </citation>
    <scope>FUNCTION</scope>
    <scope>HYDROXYMETHYLCYTOSINE-BINDING</scope>
</reference>
<reference key="8">
    <citation type="journal article" date="2017" name="Epigenetics">
        <title>UHRF2 regulates local 5-methylcytosine and suppresses spontaneous seizures.</title>
        <authorList>
            <person name="Liu Y."/>
            <person name="Zhang B."/>
            <person name="Meng X."/>
            <person name="Korn M.J."/>
            <person name="Parent J.M."/>
            <person name="Lu L.Y."/>
            <person name="Yu X."/>
        </authorList>
    </citation>
    <scope>FUNCTION</scope>
    <scope>DISRUPTION PHENOTYPE</scope>
</reference>
<reference key="9">
    <citation type="journal article" date="2017" name="J. Biol. Chem.">
        <title>The 5-Hydroxymethylcytosine (5hmC) Reader UHRF2 Is Required for Normal Levels of 5hmC in Mouse Adult Brain and Spatial Learning and Memory.</title>
        <authorList>
            <person name="Chen R."/>
            <person name="Zhang Q."/>
            <person name="Duan X."/>
            <person name="York P."/>
            <person name="Chen G.D."/>
            <person name="Yin P."/>
            <person name="Zhu H."/>
            <person name="Xu M."/>
            <person name="Chen P."/>
            <person name="Wu Q."/>
            <person name="Li D."/>
            <person name="Samarut J."/>
            <person name="Xu G."/>
            <person name="Zhang P."/>
            <person name="Cao X."/>
            <person name="Li J."/>
            <person name="Wong J."/>
        </authorList>
    </citation>
    <scope>FUNCTION</scope>
    <scope>DISRUPTION PHENOTYPE</scope>
    <scope>TISSUE SPECIFICITY</scope>
</reference>
<protein>
    <recommendedName>
        <fullName>E3 ubiquitin-protein ligase UHRF2</fullName>
        <ecNumber>2.3.2.27</ecNumber>
    </recommendedName>
    <alternativeName>
        <fullName>NIRF</fullName>
    </alternativeName>
    <alternativeName>
        <fullName>Np95-like ring finger protein</fullName>
    </alternativeName>
    <alternativeName>
        <fullName>Nuclear protein 97</fullName>
    </alternativeName>
    <alternativeName>
        <fullName>Nuclear zinc finger protein Np97</fullName>
    </alternativeName>
    <alternativeName>
        <fullName>RING-type E3 ubiquitin transferase UHRF2</fullName>
    </alternativeName>
    <alternativeName>
        <fullName>Ubiquitin-like PHD and RING finger domain-containing protein 2</fullName>
    </alternativeName>
    <alternativeName>
        <fullName>Ubiquitin-like-containing PHD and RING finger domains protein 2</fullName>
    </alternativeName>
</protein>
<organism>
    <name type="scientific">Mus musculus</name>
    <name type="common">Mouse</name>
    <dbReference type="NCBI Taxonomy" id="10090"/>
    <lineage>
        <taxon>Eukaryota</taxon>
        <taxon>Metazoa</taxon>
        <taxon>Chordata</taxon>
        <taxon>Craniata</taxon>
        <taxon>Vertebrata</taxon>
        <taxon>Euteleostomi</taxon>
        <taxon>Mammalia</taxon>
        <taxon>Eutheria</taxon>
        <taxon>Euarchontoglires</taxon>
        <taxon>Glires</taxon>
        <taxon>Rodentia</taxon>
        <taxon>Myomorpha</taxon>
        <taxon>Muroidea</taxon>
        <taxon>Muridae</taxon>
        <taxon>Murinae</taxon>
        <taxon>Mus</taxon>
        <taxon>Mus</taxon>
    </lineage>
</organism>
<name>UHRF2_MOUSE</name>
<gene>
    <name type="primary">Uhrf2</name>
    <name type="synonym">Nirf</name>
</gene>
<comment type="function">
    <text evidence="2 9 10 11">E3 ubiquitin ligase that plays important roles in DNA methylation, histone modifications, cell cycle and DNA repair. Acts as a specific reader for 5-hydroxymethylcytosine (5hmC) and thereby recruits various substrates to these sites to ubiquitinate them (PubMed:23434322, PubMed:28402695). This activity also allows the maintenance of 5mC levels at specific genomic loci and regulates neuron-related gene expression (PubMed:28115522). Participates in cell cycle regulation by ubiquitinating cyclins CCND1 and CCNE1 and thus inducing G1 arrest. Also ubiquitinates PCNP leading to its degradation by the proteasome. Plays an active role in DNA damage repair by ubiquitinating p21/CDKN1A leading to its proteasomal degradation. Also promotes DNA repair by acting as an interstrand cross-links (ICLs) sensor. Mechanistically, cooperates with UHRF1 to ensure recruitment of FANCD2 to ICLs, leading to FANCD2 monoubiquitination and subsequent activation. Contributes to UV-induced DNA damage response by physically interacting with ATR in response to irradiation, thereby promoting ATR activation (By similarity).</text>
</comment>
<comment type="catalytic activity">
    <reaction>
        <text>S-ubiquitinyl-[E2 ubiquitin-conjugating enzyme]-L-cysteine + [acceptor protein]-L-lysine = [E2 ubiquitin-conjugating enzyme]-L-cysteine + N(6)-ubiquitinyl-[acceptor protein]-L-lysine.</text>
        <dbReference type="EC" id="2.3.2.27"/>
    </reaction>
</comment>
<comment type="activity regulation">
    <text evidence="2">E3 ligase activity is robustly activated by 5-hydroxy-methylcytosine.</text>
</comment>
<comment type="pathway">
    <text>Protein modification; protein ubiquitination.</text>
</comment>
<comment type="subunit">
    <text evidence="1 2">Homodimer; disulfide-linked. Binds methylated CpG containing oligonucleotides. Interacts with H3; the interaction has a preference for the 'Lys-9' trimethylated form of H3 (H3K9me3) (By similarity). Interacts with PCNP. Interacts with HDAC1. Interacts directly with CCNE1; the interaction ubiquitinates CCNE1 and appears independent of CCNE1 phosphorylation. Interacts with CCND1; the interaction ubiquitinates CCND1 and appears independent of CCND1 phosphorylation. Interacts with p53/TP53 and RB1. Interacts with UBE2I. Interacts with ZNF618. Interacts with UHRF1. Interacts with FANCD2. Interacts with ATR. Interacts with PCNA (By similarity).</text>
</comment>
<comment type="subcellular location">
    <subcellularLocation>
        <location evidence="6 8">Nucleus</location>
    </subcellularLocation>
    <subcellularLocation>
        <location evidence="2">Chromosome</location>
    </subcellularLocation>
    <text evidence="2">Enriched at genomic loci that are enriched for 5-hydroxy-methylcytosine (5hmC).</text>
</comment>
<comment type="alternative products">
    <event type="alternative splicing"/>
    <isoform>
        <id>Q7TMI3-1</id>
        <name>1</name>
        <sequence type="displayed"/>
    </isoform>
    <isoform>
        <id>Q7TMI3-2</id>
        <name>2</name>
        <sequence type="described" ref="VSP_013877 VSP_013878"/>
    </isoform>
    <isoform>
        <id>Q7TMI3-3</id>
        <name>3</name>
        <sequence type="described" ref="VSP_013876"/>
    </isoform>
</comment>
<comment type="tissue specificity">
    <text evidence="10">Mostly detected in several tissues, including the thymus, spleen, lung, adrenal gland, and ovary. In addition, found in several tissues in the brain (cerebellum, hippocampus, and cerebral cortex).</text>
</comment>
<comment type="induction">
    <text evidence="8">Up-regulated during cell differentiation.</text>
</comment>
<comment type="PTM">
    <text evidence="1">May be autoubiquitinated; which may lead to proteasomal degradation.</text>
</comment>
<comment type="PTM">
    <text evidence="1">Phosphorylated. Phosphorylation may be mediated by CDK2 (By similarity).</text>
</comment>
<comment type="PTM">
    <text evidence="1">Autosumoylated.</text>
</comment>
<comment type="disruption phenotype">
    <text evidence="10 11">Deletion mice are viable, fertile, and grossly normal (PubMed:28115522, PubMed:28402695). However, adult mice develop frequent spontaneous seizures and display abnormal electrical activities in brain (PubMed:28402695). In addition, they display reduced 5-hydroxymethylcytosine (5hmC) in genomic DNA in the brain together with impaired spatial memory acquisition and retention (PubMed:28115522).</text>
</comment>
<accession>Q7TMI3</accession>
<accession>Q8BG56</accession>
<accession>Q8BJP6</accession>
<accession>Q8BY30</accession>
<accession>Q8K1I5</accession>
<feature type="chain" id="PRO_0000056148" description="E3 ubiquitin-protein ligase UHRF2">
    <location>
        <begin position="1"/>
        <end position="803"/>
    </location>
</feature>
<feature type="domain" description="Ubiquitin-like" evidence="5">
    <location>
        <begin position="1"/>
        <end position="78"/>
    </location>
</feature>
<feature type="domain" description="YDG" evidence="6">
    <location>
        <begin position="449"/>
        <end position="613"/>
    </location>
</feature>
<feature type="zinc finger region" description="PHD-type" evidence="3">
    <location>
        <begin position="340"/>
        <end position="396"/>
    </location>
</feature>
<feature type="zinc finger region" description="RING-type" evidence="4">
    <location>
        <begin position="734"/>
        <end position="773"/>
    </location>
</feature>
<feature type="region of interest" description="Disordered" evidence="7">
    <location>
        <begin position="79"/>
        <end position="115"/>
    </location>
</feature>
<feature type="region of interest" description="Required for interaction with histone H3">
    <location>
        <begin position="118"/>
        <end position="312"/>
    </location>
</feature>
<feature type="region of interest" description="Disordered" evidence="7">
    <location>
        <begin position="154"/>
        <end position="200"/>
    </location>
</feature>
<feature type="region of interest" description="Interaction with PCNP" evidence="1">
    <location>
        <begin position="195"/>
        <end position="289"/>
    </location>
</feature>
<feature type="region of interest" description="Methyl-CpG binding and interaction with HDAC1" evidence="1">
    <location>
        <begin position="415"/>
        <end position="645"/>
    </location>
</feature>
<feature type="region of interest" description="Disordered" evidence="7">
    <location>
        <begin position="643"/>
        <end position="676"/>
    </location>
</feature>
<feature type="compositionally biased region" description="Polar residues" evidence="7">
    <location>
        <begin position="79"/>
        <end position="96"/>
    </location>
</feature>
<feature type="compositionally biased region" description="Polar residues" evidence="7">
    <location>
        <begin position="106"/>
        <end position="115"/>
    </location>
</feature>
<feature type="compositionally biased region" description="Polar residues" evidence="7">
    <location>
        <begin position="167"/>
        <end position="181"/>
    </location>
</feature>
<feature type="compositionally biased region" description="Polar residues" evidence="7">
    <location>
        <begin position="189"/>
        <end position="200"/>
    </location>
</feature>
<feature type="compositionally biased region" description="Basic and acidic residues" evidence="7">
    <location>
        <begin position="658"/>
        <end position="668"/>
    </location>
</feature>
<feature type="modified residue" description="Phosphoserine" evidence="14">
    <location>
        <position position="668"/>
    </location>
</feature>
<feature type="disulfide bond" description="Interchain" evidence="1">
    <location>
        <position position="705"/>
    </location>
</feature>
<feature type="splice variant" id="VSP_013876" description="In isoform 3." evidence="12">
    <location>
        <begin position="217"/>
        <end position="803"/>
    </location>
</feature>
<feature type="splice variant" id="VSP_013877" description="In isoform 2." evidence="12">
    <original>DRGDEFTYTGSGGKNL</original>
    <variation>VSNDVTLFFRTNLDHF</variation>
    <location>
        <begin position="501"/>
        <end position="516"/>
    </location>
</feature>
<feature type="splice variant" id="VSP_013878" description="In isoform 2." evidence="12">
    <location>
        <begin position="517"/>
        <end position="803"/>
    </location>
</feature>
<feature type="mutagenesis site" description="Abolishes in vitro binding to H3K9me3. Prevents enrichment at pericentric heterochromatin." evidence="8">
    <original>Y</original>
    <variation>A</variation>
    <location>
        <position position="214"/>
    </location>
</feature>
<feature type="mutagenesis site" description="Abolishes in vitro binding to 'Lys-10' methylated H3, H3K9me3. Prevents enrichment at pericentric heterochromatin." evidence="8">
    <original>Y</original>
    <variation>A</variation>
    <location>
        <position position="217"/>
    </location>
</feature>
<feature type="sequence conflict" description="In Ref. 1; AAM33798." evidence="13" ref="1">
    <original>T</original>
    <variation>S</variation>
    <location>
        <position position="274"/>
    </location>
</feature>
<feature type="sequence conflict" description="In Ref. 1; AAM33798." evidence="13" ref="1">
    <original>T</original>
    <variation>S</variation>
    <location>
        <position position="278"/>
    </location>
</feature>
<feature type="sequence conflict" description="In Ref. 1; AAM33798." evidence="13" ref="1">
    <original>D</original>
    <variation>E</variation>
    <location>
        <position position="793"/>
    </location>
</feature>
<keyword id="KW-0025">Alternative splicing</keyword>
<keyword id="KW-0131">Cell cycle</keyword>
<keyword id="KW-0158">Chromosome</keyword>
<keyword id="KW-1015">Disulfide bond</keyword>
<keyword id="KW-0238">DNA-binding</keyword>
<keyword id="KW-0479">Metal-binding</keyword>
<keyword id="KW-0539">Nucleus</keyword>
<keyword id="KW-0597">Phosphoprotein</keyword>
<keyword id="KW-1185">Reference proteome</keyword>
<keyword id="KW-0808">Transferase</keyword>
<keyword id="KW-0832">Ubl conjugation</keyword>
<keyword id="KW-0833">Ubl conjugation pathway</keyword>
<keyword id="KW-0862">Zinc</keyword>
<keyword id="KW-0863">Zinc-finger</keyword>
<evidence type="ECO:0000250" key="1"/>
<evidence type="ECO:0000250" key="2">
    <source>
        <dbReference type="UniProtKB" id="Q96PU4"/>
    </source>
</evidence>
<evidence type="ECO:0000255" key="3">
    <source>
        <dbReference type="PROSITE-ProRule" id="PRU00146"/>
    </source>
</evidence>
<evidence type="ECO:0000255" key="4">
    <source>
        <dbReference type="PROSITE-ProRule" id="PRU00175"/>
    </source>
</evidence>
<evidence type="ECO:0000255" key="5">
    <source>
        <dbReference type="PROSITE-ProRule" id="PRU00214"/>
    </source>
</evidence>
<evidence type="ECO:0000255" key="6">
    <source>
        <dbReference type="PROSITE-ProRule" id="PRU00358"/>
    </source>
</evidence>
<evidence type="ECO:0000256" key="7">
    <source>
        <dbReference type="SAM" id="MobiDB-lite"/>
    </source>
</evidence>
<evidence type="ECO:0000269" key="8">
    <source>
    </source>
</evidence>
<evidence type="ECO:0000269" key="9">
    <source>
    </source>
</evidence>
<evidence type="ECO:0000269" key="10">
    <source>
    </source>
</evidence>
<evidence type="ECO:0000269" key="11">
    <source>
    </source>
</evidence>
<evidence type="ECO:0000303" key="12">
    <source>
    </source>
</evidence>
<evidence type="ECO:0000305" key="13"/>
<evidence type="ECO:0007744" key="14">
    <source>
    </source>
</evidence>